<sequence length="135" mass="14849">MGRQRQQRSRGSRSRRRVRKNISTAVVHIKSSFNNTIISVTDQEGNVIAWESAGSMGFKGSRKSTPYAAQMTAESAANKAMEHGVKRVDIQVKGHGSGRDMAARTFQAMGIEVLSIKDVTGQPHNGCRPPKRRRG</sequence>
<feature type="chain" id="PRO_0000294843" description="Small ribosomal subunit protein uS11">
    <location>
        <begin position="1"/>
        <end position="135"/>
    </location>
</feature>
<feature type="region of interest" description="Disordered" evidence="2">
    <location>
        <begin position="1"/>
        <end position="20"/>
    </location>
</feature>
<dbReference type="EMBL" id="CP000386">
    <property type="protein sequence ID" value="ABG05074.1"/>
    <property type="molecule type" value="Genomic_DNA"/>
</dbReference>
<dbReference type="RefSeq" id="WP_011565089.1">
    <property type="nucleotide sequence ID" value="NC_008148.1"/>
</dbReference>
<dbReference type="SMR" id="Q1AU54"/>
<dbReference type="STRING" id="266117.Rxyl_2130"/>
<dbReference type="KEGG" id="rxy:Rxyl_2130"/>
<dbReference type="eggNOG" id="COG0100">
    <property type="taxonomic scope" value="Bacteria"/>
</dbReference>
<dbReference type="HOGENOM" id="CLU_072439_5_0_11"/>
<dbReference type="OrthoDB" id="9806415at2"/>
<dbReference type="PhylomeDB" id="Q1AU54"/>
<dbReference type="Proteomes" id="UP000006637">
    <property type="component" value="Chromosome"/>
</dbReference>
<dbReference type="GO" id="GO:1990904">
    <property type="term" value="C:ribonucleoprotein complex"/>
    <property type="evidence" value="ECO:0007669"/>
    <property type="project" value="UniProtKB-KW"/>
</dbReference>
<dbReference type="GO" id="GO:0005840">
    <property type="term" value="C:ribosome"/>
    <property type="evidence" value="ECO:0007669"/>
    <property type="project" value="UniProtKB-KW"/>
</dbReference>
<dbReference type="GO" id="GO:0019843">
    <property type="term" value="F:rRNA binding"/>
    <property type="evidence" value="ECO:0007669"/>
    <property type="project" value="UniProtKB-UniRule"/>
</dbReference>
<dbReference type="GO" id="GO:0003735">
    <property type="term" value="F:structural constituent of ribosome"/>
    <property type="evidence" value="ECO:0007669"/>
    <property type="project" value="InterPro"/>
</dbReference>
<dbReference type="GO" id="GO:0006412">
    <property type="term" value="P:translation"/>
    <property type="evidence" value="ECO:0007669"/>
    <property type="project" value="UniProtKB-UniRule"/>
</dbReference>
<dbReference type="FunFam" id="3.30.420.80:FF:000001">
    <property type="entry name" value="30S ribosomal protein S11"/>
    <property type="match status" value="1"/>
</dbReference>
<dbReference type="Gene3D" id="3.30.420.80">
    <property type="entry name" value="Ribosomal protein S11"/>
    <property type="match status" value="1"/>
</dbReference>
<dbReference type="HAMAP" id="MF_01310">
    <property type="entry name" value="Ribosomal_uS11"/>
    <property type="match status" value="1"/>
</dbReference>
<dbReference type="InterPro" id="IPR001971">
    <property type="entry name" value="Ribosomal_uS11"/>
</dbReference>
<dbReference type="InterPro" id="IPR019981">
    <property type="entry name" value="Ribosomal_uS11_bac-type"/>
</dbReference>
<dbReference type="InterPro" id="IPR036967">
    <property type="entry name" value="Ribosomal_uS11_sf"/>
</dbReference>
<dbReference type="NCBIfam" id="NF003698">
    <property type="entry name" value="PRK05309.1"/>
    <property type="match status" value="1"/>
</dbReference>
<dbReference type="NCBIfam" id="TIGR03632">
    <property type="entry name" value="uS11_bact"/>
    <property type="match status" value="1"/>
</dbReference>
<dbReference type="PANTHER" id="PTHR11759">
    <property type="entry name" value="40S RIBOSOMAL PROTEIN S14/30S RIBOSOMAL PROTEIN S11"/>
    <property type="match status" value="1"/>
</dbReference>
<dbReference type="Pfam" id="PF00411">
    <property type="entry name" value="Ribosomal_S11"/>
    <property type="match status" value="1"/>
</dbReference>
<dbReference type="PIRSF" id="PIRSF002131">
    <property type="entry name" value="Ribosomal_S11"/>
    <property type="match status" value="1"/>
</dbReference>
<dbReference type="SUPFAM" id="SSF53137">
    <property type="entry name" value="Translational machinery components"/>
    <property type="match status" value="1"/>
</dbReference>
<name>RS11_RUBXD</name>
<evidence type="ECO:0000255" key="1">
    <source>
        <dbReference type="HAMAP-Rule" id="MF_01310"/>
    </source>
</evidence>
<evidence type="ECO:0000256" key="2">
    <source>
        <dbReference type="SAM" id="MobiDB-lite"/>
    </source>
</evidence>
<evidence type="ECO:0000305" key="3"/>
<accession>Q1AU54</accession>
<comment type="function">
    <text evidence="1">Located on the platform of the 30S subunit, it bridges several disparate RNA helices of the 16S rRNA. Forms part of the Shine-Dalgarno cleft in the 70S ribosome.</text>
</comment>
<comment type="subunit">
    <text evidence="1">Part of the 30S ribosomal subunit. Interacts with proteins S7 and S18. Binds to IF-3.</text>
</comment>
<comment type="similarity">
    <text evidence="1">Belongs to the universal ribosomal protein uS11 family.</text>
</comment>
<keyword id="KW-1185">Reference proteome</keyword>
<keyword id="KW-0687">Ribonucleoprotein</keyword>
<keyword id="KW-0689">Ribosomal protein</keyword>
<keyword id="KW-0694">RNA-binding</keyword>
<keyword id="KW-0699">rRNA-binding</keyword>
<reference key="1">
    <citation type="submission" date="2006-06" db="EMBL/GenBank/DDBJ databases">
        <title>Complete sequence of Rubrobacter xylanophilus DSM 9941.</title>
        <authorList>
            <consortium name="US DOE Joint Genome Institute"/>
            <person name="Copeland A."/>
            <person name="Lucas S."/>
            <person name="Lapidus A."/>
            <person name="Barry K."/>
            <person name="Detter J.C."/>
            <person name="Glavina del Rio T."/>
            <person name="Hammon N."/>
            <person name="Israni S."/>
            <person name="Dalin E."/>
            <person name="Tice H."/>
            <person name="Pitluck S."/>
            <person name="Munk A.C."/>
            <person name="Brettin T."/>
            <person name="Bruce D."/>
            <person name="Han C."/>
            <person name="Tapia R."/>
            <person name="Gilna P."/>
            <person name="Schmutz J."/>
            <person name="Larimer F."/>
            <person name="Land M."/>
            <person name="Hauser L."/>
            <person name="Kyrpides N."/>
            <person name="Lykidis A."/>
            <person name="da Costa M.S."/>
            <person name="Rainey F.A."/>
            <person name="Empadinhas N."/>
            <person name="Jolivet E."/>
            <person name="Battista J.R."/>
            <person name="Richardson P."/>
        </authorList>
    </citation>
    <scope>NUCLEOTIDE SEQUENCE [LARGE SCALE GENOMIC DNA]</scope>
    <source>
        <strain>DSM 9941 / JCM 11954 / NBRC 16129 / PRD-1</strain>
    </source>
</reference>
<organism>
    <name type="scientific">Rubrobacter xylanophilus (strain DSM 9941 / JCM 11954 / NBRC 16129 / PRD-1)</name>
    <dbReference type="NCBI Taxonomy" id="266117"/>
    <lineage>
        <taxon>Bacteria</taxon>
        <taxon>Bacillati</taxon>
        <taxon>Actinomycetota</taxon>
        <taxon>Rubrobacteria</taxon>
        <taxon>Rubrobacterales</taxon>
        <taxon>Rubrobacteraceae</taxon>
        <taxon>Rubrobacter</taxon>
    </lineage>
</organism>
<gene>
    <name evidence="1" type="primary">rpsK</name>
    <name type="ordered locus">Rxyl_2130</name>
</gene>
<protein>
    <recommendedName>
        <fullName evidence="1">Small ribosomal subunit protein uS11</fullName>
    </recommendedName>
    <alternativeName>
        <fullName evidence="3">30S ribosomal protein S11</fullName>
    </alternativeName>
</protein>
<proteinExistence type="inferred from homology"/>